<organism>
    <name type="scientific">Nitrobacter winogradskyi (strain ATCC 25391 / DSM 10237 / CIP 104748 / NCIMB 11846 / Nb-255)</name>
    <dbReference type="NCBI Taxonomy" id="323098"/>
    <lineage>
        <taxon>Bacteria</taxon>
        <taxon>Pseudomonadati</taxon>
        <taxon>Pseudomonadota</taxon>
        <taxon>Alphaproteobacteria</taxon>
        <taxon>Hyphomicrobiales</taxon>
        <taxon>Nitrobacteraceae</taxon>
        <taxon>Nitrobacter</taxon>
    </lineage>
</organism>
<feature type="chain" id="PRO_0000224082" description="DNA-directed RNA polymerase subunit beta">
    <location>
        <begin position="1"/>
        <end position="1380"/>
    </location>
</feature>
<sequence length="1380" mass="154232">MVQQTFTGRKRVRKFFGHIREVAEMPNLIEVQKASYDQFLMVDEPEGGRLDEGLQAVFKSVFPINDFSGASQLEFVRYEFEAPKYDVDECRQRGMTYAAPLKVTLRLIVFDIDEETGAKSVKDIKEQDVYMGDIPLMTMNGTFVVNGTERVIVSQMHRSPGVFFDHDKGKTHSSGKLLFAARVIPYRGSWLDIEFDAKDIVFARIDRRRKIPVTSLMFALGLDGEEILSTFYKKIIYKRAKSGGGSDGWRVPYDPVRFRGYSTLNDLIDADTGKVVLEAGKKLTVRAARQLQEKGLKALRMSDEELVGMYLAEDLVNPKTGEIYAEAGEEITEKSLKALNEEGYKELPLLDIDHVNVGPYIRNTLAADKNMTREDALFDIYRVMRPGEPPTLESAQNMFQSLFFDAERYDLSAVGRVKMNMRLDLDAPDTYRTLRKEDILAVIKTLVDLRDGKGEIDDIDHLGNRRVRSVGELMENQYRVGLLRMERAIKERMSSVDIDTVMPQDLINAKPAAAAVREFFGSSQLSQFMDQTNPLSEITHKRRLSALGPGGLTRERAGFEVRDVHPTHYGRICPIETPEGPNIGLINSLATFARVNKYGFVETPYRKVKDGRVTDEVVYLSAMEEGRYHVAQANLPLDARGRFTEDLVVCRHAGEVLPVTPDKVDFMDVSPKQLVSVAAALIPFLENDDANRALMGSNMQRQAVPLVRAEAPFVGTGMEGVVARDSGAAIAARRSGVIDQIDATRVVIRATEDLDPTKSGVDIYRLMKYQRSNQSTCINQRPLVKVGDIVRKGDIIADGPSTDLGELALGRNVLVAFMPWNGYNFEDSILLSERIVKEDVFTSIHIEEFEVMARDTKLGPEEITRDIPNVSEEALKSLDEAGIVYIGAEVRAGDILVGKITPKGESPMTPEEKLLRAIFGEKASDVRDTSLRVPPGVQGTIVEVRVFNRHGVDKDERALAIEREEIERLAKDRDDEQAILDRNVYGRLADLLENRQGIAGPKGFKKDTKITRAVLDEYPKSQWWLFASPNDKLMAEIEAMRKQYDESKKGLEQRFLDKVEKLQRGDELPPGVMKMVKVFVAVKRKIQPGDKMAGRHGNKGVVSKIVPIEDMPFLEDGTHADIVLNPLGVPSRMNVGQILETHLGWACAGLGRRIGQAVDAYLASAKQETKPLKETLKKVYGDNETIKSLEDHELVELGRNLRRGVPIATPVFDGAKEADIEQMLELAGMDKSGQSTVYDGRTGDPFDRKVTVGYIYMLKLHHLVDDKIHARSIGPYSLVTQQPLGGKAQFGGQRFGEMEVWALEAYGAAYTLQEMLTVKSDDVAGRTKVYEAIVRGDDTFEAGIPESFNVLVKEMRSLGLNVDLHNSKIGDMMPTSEAAE</sequence>
<proteinExistence type="inferred from homology"/>
<name>RPOB_NITWN</name>
<reference key="1">
    <citation type="journal article" date="2006" name="Appl. Environ. Microbiol.">
        <title>Genome sequence of the chemolithoautotrophic nitrite-oxidizing bacterium Nitrobacter winogradskyi Nb-255.</title>
        <authorList>
            <person name="Starkenburg S.R."/>
            <person name="Chain P.S.G."/>
            <person name="Sayavedra-Soto L.A."/>
            <person name="Hauser L."/>
            <person name="Land M.L."/>
            <person name="Larimer F.W."/>
            <person name="Malfatti S.A."/>
            <person name="Klotz M.G."/>
            <person name="Bottomley P.J."/>
            <person name="Arp D.J."/>
            <person name="Hickey W.J."/>
        </authorList>
    </citation>
    <scope>NUCLEOTIDE SEQUENCE [LARGE SCALE GENOMIC DNA]</scope>
    <source>
        <strain>ATCC 25391 / DSM 10237 / CIP 104748 / NCIMB 11846 / Nb-255</strain>
    </source>
</reference>
<gene>
    <name evidence="1" type="primary">rpoB</name>
    <name type="ordered locus">Nwi_1350</name>
</gene>
<accession>Q3SSY0</accession>
<dbReference type="EC" id="2.7.7.6" evidence="1"/>
<dbReference type="EMBL" id="CP000115">
    <property type="protein sequence ID" value="ABA04611.1"/>
    <property type="molecule type" value="Genomic_DNA"/>
</dbReference>
<dbReference type="RefSeq" id="WP_011314629.1">
    <property type="nucleotide sequence ID" value="NC_007406.1"/>
</dbReference>
<dbReference type="SMR" id="Q3SSY0"/>
<dbReference type="STRING" id="323098.Nwi_1350"/>
<dbReference type="KEGG" id="nwi:Nwi_1350"/>
<dbReference type="eggNOG" id="COG0085">
    <property type="taxonomic scope" value="Bacteria"/>
</dbReference>
<dbReference type="HOGENOM" id="CLU_000524_4_0_5"/>
<dbReference type="OrthoDB" id="9803954at2"/>
<dbReference type="Proteomes" id="UP000002531">
    <property type="component" value="Chromosome"/>
</dbReference>
<dbReference type="GO" id="GO:0000428">
    <property type="term" value="C:DNA-directed RNA polymerase complex"/>
    <property type="evidence" value="ECO:0007669"/>
    <property type="project" value="UniProtKB-KW"/>
</dbReference>
<dbReference type="GO" id="GO:0003677">
    <property type="term" value="F:DNA binding"/>
    <property type="evidence" value="ECO:0007669"/>
    <property type="project" value="UniProtKB-UniRule"/>
</dbReference>
<dbReference type="GO" id="GO:0003899">
    <property type="term" value="F:DNA-directed RNA polymerase activity"/>
    <property type="evidence" value="ECO:0007669"/>
    <property type="project" value="UniProtKB-UniRule"/>
</dbReference>
<dbReference type="GO" id="GO:0032549">
    <property type="term" value="F:ribonucleoside binding"/>
    <property type="evidence" value="ECO:0007669"/>
    <property type="project" value="InterPro"/>
</dbReference>
<dbReference type="GO" id="GO:0006351">
    <property type="term" value="P:DNA-templated transcription"/>
    <property type="evidence" value="ECO:0007669"/>
    <property type="project" value="UniProtKB-UniRule"/>
</dbReference>
<dbReference type="CDD" id="cd00653">
    <property type="entry name" value="RNA_pol_B_RPB2"/>
    <property type="match status" value="1"/>
</dbReference>
<dbReference type="FunFam" id="2.40.50.100:FF:000006">
    <property type="entry name" value="DNA-directed RNA polymerase subunit beta"/>
    <property type="match status" value="1"/>
</dbReference>
<dbReference type="FunFam" id="3.90.1800.10:FF:000001">
    <property type="entry name" value="DNA-directed RNA polymerase subunit beta"/>
    <property type="match status" value="1"/>
</dbReference>
<dbReference type="Gene3D" id="2.40.50.100">
    <property type="match status" value="1"/>
</dbReference>
<dbReference type="Gene3D" id="2.40.50.150">
    <property type="match status" value="1"/>
</dbReference>
<dbReference type="Gene3D" id="3.90.1100.10">
    <property type="match status" value="2"/>
</dbReference>
<dbReference type="Gene3D" id="2.30.150.10">
    <property type="entry name" value="DNA-directed RNA polymerase, beta subunit, external 1 domain"/>
    <property type="match status" value="1"/>
</dbReference>
<dbReference type="Gene3D" id="2.40.270.10">
    <property type="entry name" value="DNA-directed RNA polymerase, subunit 2, domain 6"/>
    <property type="match status" value="1"/>
</dbReference>
<dbReference type="Gene3D" id="3.90.1800.10">
    <property type="entry name" value="RNA polymerase alpha subunit dimerisation domain"/>
    <property type="match status" value="1"/>
</dbReference>
<dbReference type="Gene3D" id="3.90.1110.10">
    <property type="entry name" value="RNA polymerase Rpb2, domain 2"/>
    <property type="match status" value="1"/>
</dbReference>
<dbReference type="HAMAP" id="MF_01321">
    <property type="entry name" value="RNApol_bact_RpoB"/>
    <property type="match status" value="1"/>
</dbReference>
<dbReference type="InterPro" id="IPR042107">
    <property type="entry name" value="DNA-dir_RNA_pol_bsu_ext_1_sf"/>
</dbReference>
<dbReference type="InterPro" id="IPR019462">
    <property type="entry name" value="DNA-dir_RNA_pol_bsu_external_1"/>
</dbReference>
<dbReference type="InterPro" id="IPR015712">
    <property type="entry name" value="DNA-dir_RNA_pol_su2"/>
</dbReference>
<dbReference type="InterPro" id="IPR007120">
    <property type="entry name" value="DNA-dir_RNAP_su2_dom"/>
</dbReference>
<dbReference type="InterPro" id="IPR037033">
    <property type="entry name" value="DNA-dir_RNAP_su2_hyb_sf"/>
</dbReference>
<dbReference type="InterPro" id="IPR010243">
    <property type="entry name" value="RNA_pol_bsu_bac"/>
</dbReference>
<dbReference type="InterPro" id="IPR007121">
    <property type="entry name" value="RNA_pol_bsu_CS"/>
</dbReference>
<dbReference type="InterPro" id="IPR007644">
    <property type="entry name" value="RNA_pol_bsu_protrusion"/>
</dbReference>
<dbReference type="InterPro" id="IPR007642">
    <property type="entry name" value="RNA_pol_Rpb2_2"/>
</dbReference>
<dbReference type="InterPro" id="IPR037034">
    <property type="entry name" value="RNA_pol_Rpb2_2_sf"/>
</dbReference>
<dbReference type="InterPro" id="IPR007645">
    <property type="entry name" value="RNA_pol_Rpb2_3"/>
</dbReference>
<dbReference type="InterPro" id="IPR007641">
    <property type="entry name" value="RNA_pol_Rpb2_7"/>
</dbReference>
<dbReference type="InterPro" id="IPR014724">
    <property type="entry name" value="RNA_pol_RPB2_OB-fold"/>
</dbReference>
<dbReference type="NCBIfam" id="NF001616">
    <property type="entry name" value="PRK00405.1"/>
    <property type="match status" value="1"/>
</dbReference>
<dbReference type="NCBIfam" id="TIGR02013">
    <property type="entry name" value="rpoB"/>
    <property type="match status" value="1"/>
</dbReference>
<dbReference type="PANTHER" id="PTHR20856">
    <property type="entry name" value="DNA-DIRECTED RNA POLYMERASE I SUBUNIT 2"/>
    <property type="match status" value="1"/>
</dbReference>
<dbReference type="Pfam" id="PF04563">
    <property type="entry name" value="RNA_pol_Rpb2_1"/>
    <property type="match status" value="1"/>
</dbReference>
<dbReference type="Pfam" id="PF04561">
    <property type="entry name" value="RNA_pol_Rpb2_2"/>
    <property type="match status" value="2"/>
</dbReference>
<dbReference type="Pfam" id="PF04565">
    <property type="entry name" value="RNA_pol_Rpb2_3"/>
    <property type="match status" value="1"/>
</dbReference>
<dbReference type="Pfam" id="PF10385">
    <property type="entry name" value="RNA_pol_Rpb2_45"/>
    <property type="match status" value="1"/>
</dbReference>
<dbReference type="Pfam" id="PF00562">
    <property type="entry name" value="RNA_pol_Rpb2_6"/>
    <property type="match status" value="1"/>
</dbReference>
<dbReference type="Pfam" id="PF04560">
    <property type="entry name" value="RNA_pol_Rpb2_7"/>
    <property type="match status" value="1"/>
</dbReference>
<dbReference type="SUPFAM" id="SSF64484">
    <property type="entry name" value="beta and beta-prime subunits of DNA dependent RNA-polymerase"/>
    <property type="match status" value="1"/>
</dbReference>
<dbReference type="PROSITE" id="PS01166">
    <property type="entry name" value="RNA_POL_BETA"/>
    <property type="match status" value="1"/>
</dbReference>
<keyword id="KW-0240">DNA-directed RNA polymerase</keyword>
<keyword id="KW-0548">Nucleotidyltransferase</keyword>
<keyword id="KW-1185">Reference proteome</keyword>
<keyword id="KW-0804">Transcription</keyword>
<keyword id="KW-0808">Transferase</keyword>
<comment type="function">
    <text evidence="1">DNA-dependent RNA polymerase catalyzes the transcription of DNA into RNA using the four ribonucleoside triphosphates as substrates.</text>
</comment>
<comment type="catalytic activity">
    <reaction evidence="1">
        <text>RNA(n) + a ribonucleoside 5'-triphosphate = RNA(n+1) + diphosphate</text>
        <dbReference type="Rhea" id="RHEA:21248"/>
        <dbReference type="Rhea" id="RHEA-COMP:14527"/>
        <dbReference type="Rhea" id="RHEA-COMP:17342"/>
        <dbReference type="ChEBI" id="CHEBI:33019"/>
        <dbReference type="ChEBI" id="CHEBI:61557"/>
        <dbReference type="ChEBI" id="CHEBI:140395"/>
        <dbReference type="EC" id="2.7.7.6"/>
    </reaction>
</comment>
<comment type="subunit">
    <text evidence="1">The RNAP catalytic core consists of 2 alpha, 1 beta, 1 beta' and 1 omega subunit. When a sigma factor is associated with the core the holoenzyme is formed, which can initiate transcription.</text>
</comment>
<comment type="similarity">
    <text evidence="1">Belongs to the RNA polymerase beta chain family.</text>
</comment>
<evidence type="ECO:0000255" key="1">
    <source>
        <dbReference type="HAMAP-Rule" id="MF_01321"/>
    </source>
</evidence>
<protein>
    <recommendedName>
        <fullName evidence="1">DNA-directed RNA polymerase subunit beta</fullName>
        <shortName evidence="1">RNAP subunit beta</shortName>
        <ecNumber evidence="1">2.7.7.6</ecNumber>
    </recommendedName>
    <alternativeName>
        <fullName evidence="1">RNA polymerase subunit beta</fullName>
    </alternativeName>
    <alternativeName>
        <fullName evidence="1">Transcriptase subunit beta</fullName>
    </alternativeName>
</protein>